<name>TRUB_HELMO</name>
<comment type="function">
    <text evidence="1">Responsible for synthesis of pseudouridine from uracil-55 in the psi GC loop of transfer RNAs.</text>
</comment>
<comment type="catalytic activity">
    <reaction evidence="1">
        <text>uridine(55) in tRNA = pseudouridine(55) in tRNA</text>
        <dbReference type="Rhea" id="RHEA:42532"/>
        <dbReference type="Rhea" id="RHEA-COMP:10101"/>
        <dbReference type="Rhea" id="RHEA-COMP:10102"/>
        <dbReference type="ChEBI" id="CHEBI:65314"/>
        <dbReference type="ChEBI" id="CHEBI:65315"/>
        <dbReference type="EC" id="5.4.99.25"/>
    </reaction>
</comment>
<comment type="similarity">
    <text evidence="1">Belongs to the pseudouridine synthase TruB family. Type 1 subfamily.</text>
</comment>
<reference key="1">
    <citation type="journal article" date="2002" name="Science">
        <title>Whole-genome analysis of photosynthetic prokaryotes.</title>
        <authorList>
            <person name="Raymond J."/>
            <person name="Zhaxybayeva O."/>
            <person name="Gogarten J.P."/>
            <person name="Gerdes S.Y."/>
            <person name="Blankenship R.E."/>
        </authorList>
    </citation>
    <scope>NUCLEOTIDE SEQUENCE [GENOMIC DNA]</scope>
</reference>
<dbReference type="EC" id="5.4.99.25" evidence="1"/>
<dbReference type="EMBL" id="AY142837">
    <property type="protein sequence ID" value="AAN87441.1"/>
    <property type="molecule type" value="Genomic_DNA"/>
</dbReference>
<dbReference type="RefSeq" id="WP_235911047.1">
    <property type="nucleotide sequence ID" value="NZ_WNKU01000026.1"/>
</dbReference>
<dbReference type="SMR" id="Q8GB99"/>
<dbReference type="GO" id="GO:0003723">
    <property type="term" value="F:RNA binding"/>
    <property type="evidence" value="ECO:0007669"/>
    <property type="project" value="InterPro"/>
</dbReference>
<dbReference type="GO" id="GO:0160148">
    <property type="term" value="F:tRNA pseudouridine(55) synthase activity"/>
    <property type="evidence" value="ECO:0007669"/>
    <property type="project" value="UniProtKB-EC"/>
</dbReference>
<dbReference type="GO" id="GO:1990481">
    <property type="term" value="P:mRNA pseudouridine synthesis"/>
    <property type="evidence" value="ECO:0007669"/>
    <property type="project" value="TreeGrafter"/>
</dbReference>
<dbReference type="GO" id="GO:0006400">
    <property type="term" value="P:tRNA modification"/>
    <property type="evidence" value="ECO:0007669"/>
    <property type="project" value="TreeGrafter"/>
</dbReference>
<dbReference type="CDD" id="cd02573">
    <property type="entry name" value="PseudoU_synth_EcTruB"/>
    <property type="match status" value="1"/>
</dbReference>
<dbReference type="Gene3D" id="3.30.2350.10">
    <property type="entry name" value="Pseudouridine synthase"/>
    <property type="match status" value="1"/>
</dbReference>
<dbReference type="HAMAP" id="MF_01080">
    <property type="entry name" value="TruB_bact"/>
    <property type="match status" value="1"/>
</dbReference>
<dbReference type="InterPro" id="IPR020103">
    <property type="entry name" value="PsdUridine_synth_cat_dom_sf"/>
</dbReference>
<dbReference type="InterPro" id="IPR002501">
    <property type="entry name" value="PsdUridine_synth_N"/>
</dbReference>
<dbReference type="InterPro" id="IPR014780">
    <property type="entry name" value="tRNA_psdUridine_synth_TruB"/>
</dbReference>
<dbReference type="InterPro" id="IPR032819">
    <property type="entry name" value="TruB_C"/>
</dbReference>
<dbReference type="NCBIfam" id="TIGR00431">
    <property type="entry name" value="TruB"/>
    <property type="match status" value="1"/>
</dbReference>
<dbReference type="PANTHER" id="PTHR13767:SF2">
    <property type="entry name" value="PSEUDOURIDYLATE SYNTHASE TRUB1"/>
    <property type="match status" value="1"/>
</dbReference>
<dbReference type="PANTHER" id="PTHR13767">
    <property type="entry name" value="TRNA-PSEUDOURIDINE SYNTHASE"/>
    <property type="match status" value="1"/>
</dbReference>
<dbReference type="Pfam" id="PF16198">
    <property type="entry name" value="TruB_C_2"/>
    <property type="match status" value="1"/>
</dbReference>
<dbReference type="Pfam" id="PF01509">
    <property type="entry name" value="TruB_N"/>
    <property type="match status" value="1"/>
</dbReference>
<dbReference type="SUPFAM" id="SSF55120">
    <property type="entry name" value="Pseudouridine synthase"/>
    <property type="match status" value="1"/>
</dbReference>
<proteinExistence type="inferred from homology"/>
<protein>
    <recommendedName>
        <fullName evidence="1">tRNA pseudouridine synthase B</fullName>
        <ecNumber evidence="1">5.4.99.25</ecNumber>
    </recommendedName>
    <alternativeName>
        <fullName evidence="1">tRNA pseudouridine(55) synthase</fullName>
        <shortName evidence="1">Psi55 synthase</shortName>
    </alternativeName>
    <alternativeName>
        <fullName evidence="1">tRNA pseudouridylate synthase</fullName>
    </alternativeName>
    <alternativeName>
        <fullName evidence="1">tRNA-uridine isomerase</fullName>
    </alternativeName>
</protein>
<feature type="chain" id="PRO_0000121844" description="tRNA pseudouridine synthase B">
    <location>
        <begin position="1"/>
        <end position="307" status="greater than"/>
    </location>
</feature>
<feature type="active site" description="Nucleophile" evidence="1">
    <location>
        <position position="45"/>
    </location>
</feature>
<feature type="non-terminal residue">
    <location>
        <position position="307"/>
    </location>
</feature>
<accession>Q8GB99</accession>
<sequence>MNPLKSPLEGFLNILKPPGMTSHDVVAKARRILREKRIGHMGTLDPDAAGVLPIALGQATRLIELVRGDKSYRAQLLLGRITDSQDVSGRIVEEHPIPQLTRQAWEELLKEFQGLMEQIPPMVSAVSVGGKRLYEYARQGIEVERPSRKINIDRIDIVQYHEHAPGELILDVDCSGGTYIRTLCHDIGQRLGCGAIMGWLIRRRSGPFRLQNSCTLKELEQGLAPEKLVSPGEVLQHLPNMEINERRLPALKQGLAQFLPDKNWMEGQWIRMNYRGQLLAVGQAIWQDDRWLCQPRKVLQWSESILK</sequence>
<keyword id="KW-0413">Isomerase</keyword>
<keyword id="KW-0819">tRNA processing</keyword>
<organism>
    <name type="scientific">Heliobacterium mobile</name>
    <name type="common">Heliobacillus mobilis</name>
    <dbReference type="NCBI Taxonomy" id="28064"/>
    <lineage>
        <taxon>Bacteria</taxon>
        <taxon>Bacillati</taxon>
        <taxon>Bacillota</taxon>
        <taxon>Clostridia</taxon>
        <taxon>Eubacteriales</taxon>
        <taxon>Heliobacteriaceae</taxon>
        <taxon>Heliobacterium</taxon>
    </lineage>
</organism>
<evidence type="ECO:0000255" key="1">
    <source>
        <dbReference type="HAMAP-Rule" id="MF_01080"/>
    </source>
</evidence>
<gene>
    <name evidence="1" type="primary">truB</name>
</gene>